<reference key="1">
    <citation type="submission" date="2004-03" db="EMBL/GenBank/DDBJ databases">
        <title>MS4A genes.</title>
        <authorList>
            <person name="Liang Y."/>
            <person name="Tedder T.F."/>
        </authorList>
    </citation>
    <scope>NUCLEOTIDE SEQUENCE [MRNA] (ISOFORMS 1 AND 3)</scope>
    <scope>VARIANT ARG-47</scope>
</reference>
<reference key="2">
    <citation type="journal article" date="2006" name="Nature">
        <title>Human chromosome 11 DNA sequence and analysis including novel gene identification.</title>
        <authorList>
            <person name="Taylor T.D."/>
            <person name="Noguchi H."/>
            <person name="Totoki Y."/>
            <person name="Toyoda A."/>
            <person name="Kuroki Y."/>
            <person name="Dewar K."/>
            <person name="Lloyd C."/>
            <person name="Itoh T."/>
            <person name="Takeda T."/>
            <person name="Kim D.-W."/>
            <person name="She X."/>
            <person name="Barlow K.F."/>
            <person name="Bloom T."/>
            <person name="Bruford E."/>
            <person name="Chang J.L."/>
            <person name="Cuomo C.A."/>
            <person name="Eichler E."/>
            <person name="FitzGerald M.G."/>
            <person name="Jaffe D.B."/>
            <person name="LaButti K."/>
            <person name="Nicol R."/>
            <person name="Park H.-S."/>
            <person name="Seaman C."/>
            <person name="Sougnez C."/>
            <person name="Yang X."/>
            <person name="Zimmer A.R."/>
            <person name="Zody M.C."/>
            <person name="Birren B.W."/>
            <person name="Nusbaum C."/>
            <person name="Fujiyama A."/>
            <person name="Hattori M."/>
            <person name="Rogers J."/>
            <person name="Lander E.S."/>
            <person name="Sakaki Y."/>
        </authorList>
    </citation>
    <scope>NUCLEOTIDE SEQUENCE [LARGE SCALE GENOMIC DNA]</scope>
</reference>
<reference key="3">
    <citation type="submission" date="2005-07" db="EMBL/GenBank/DDBJ databases">
        <authorList>
            <person name="Mural R.J."/>
            <person name="Istrail S."/>
            <person name="Sutton G.G."/>
            <person name="Florea L."/>
            <person name="Halpern A.L."/>
            <person name="Mobarry C.M."/>
            <person name="Lippert R."/>
            <person name="Walenz B."/>
            <person name="Shatkay H."/>
            <person name="Dew I."/>
            <person name="Miller J.R."/>
            <person name="Flanigan M.J."/>
            <person name="Edwards N.J."/>
            <person name="Bolanos R."/>
            <person name="Fasulo D."/>
            <person name="Halldorsson B.V."/>
            <person name="Hannenhalli S."/>
            <person name="Turner R."/>
            <person name="Yooseph S."/>
            <person name="Lu F."/>
            <person name="Nusskern D.R."/>
            <person name="Shue B.C."/>
            <person name="Zheng X.H."/>
            <person name="Zhong F."/>
            <person name="Delcher A.L."/>
            <person name="Huson D.H."/>
            <person name="Kravitz S.A."/>
            <person name="Mouchard L."/>
            <person name="Reinert K."/>
            <person name="Remington K.A."/>
            <person name="Clark A.G."/>
            <person name="Waterman M.S."/>
            <person name="Eichler E.E."/>
            <person name="Adams M.D."/>
            <person name="Hunkapiller M.W."/>
            <person name="Myers E.W."/>
            <person name="Venter J.C."/>
        </authorList>
    </citation>
    <scope>NUCLEOTIDE SEQUENCE [LARGE SCALE GENOMIC DNA]</scope>
</reference>
<reference key="4">
    <citation type="journal article" date="2004" name="Genome Res.">
        <title>The status, quality, and expansion of the NIH full-length cDNA project: the Mammalian Gene Collection (MGC).</title>
        <authorList>
            <consortium name="The MGC Project Team"/>
        </authorList>
    </citation>
    <scope>NUCLEOTIDE SEQUENCE [LARGE SCALE MRNA] (ISOFORM 2)</scope>
    <source>
        <tissue>Brain</tissue>
    </source>
</reference>
<accession>Q8N5U1</accession>
<accession>A9UJY6</accession>
<accession>A9UJY7</accession>
<accession>F2Z2J5</accession>
<organism>
    <name type="scientific">Homo sapiens</name>
    <name type="common">Human</name>
    <dbReference type="NCBI Taxonomy" id="9606"/>
    <lineage>
        <taxon>Eukaryota</taxon>
        <taxon>Metazoa</taxon>
        <taxon>Chordata</taxon>
        <taxon>Craniata</taxon>
        <taxon>Vertebrata</taxon>
        <taxon>Euteleostomi</taxon>
        <taxon>Mammalia</taxon>
        <taxon>Eutheria</taxon>
        <taxon>Euarchontoglires</taxon>
        <taxon>Primates</taxon>
        <taxon>Haplorrhini</taxon>
        <taxon>Catarrhini</taxon>
        <taxon>Hominidae</taxon>
        <taxon>Homo</taxon>
    </lineage>
</organism>
<gene>
    <name type="primary">MS4A15</name>
</gene>
<sequence>MSAAPASNGVFVVIPPNNASGLCPPPAILPTSMCQPPGIMQFEEPPLGAQTPRATQPPDLRPVETFLTGEPKVLGTVQILIGLIHLGFGSVLLMVRRGHVGIFFIEGGVPFWGGACFIISGSLSVAAEKNHTSCLVRSSLGTNILSVMAAFAGTAILLMDFGVTNRDVDRGYLAVLTIFTVLEFFTAVIAMHFGCQAIHAQASAPVIFLPNAFSADFNIPSPAASAPPAYDNVAYAQGVV</sequence>
<evidence type="ECO:0000250" key="1"/>
<evidence type="ECO:0000255" key="2"/>
<evidence type="ECO:0000269" key="3">
    <source ref="1"/>
</evidence>
<evidence type="ECO:0000303" key="4">
    <source>
    </source>
</evidence>
<evidence type="ECO:0000303" key="5">
    <source ref="1"/>
</evidence>
<evidence type="ECO:0000305" key="6"/>
<feature type="chain" id="PRO_0000320577" description="Membrane-spanning 4-domains subfamily A member 15">
    <location>
        <begin position="1"/>
        <end position="240"/>
    </location>
</feature>
<feature type="transmembrane region" description="Helical" evidence="2">
    <location>
        <begin position="73"/>
        <end position="93"/>
    </location>
</feature>
<feature type="transmembrane region" description="Helical" evidence="2">
    <location>
        <begin position="100"/>
        <end position="120"/>
    </location>
</feature>
<feature type="transmembrane region" description="Helical" evidence="2">
    <location>
        <begin position="144"/>
        <end position="164"/>
    </location>
</feature>
<feature type="transmembrane region" description="Helical" evidence="2">
    <location>
        <begin position="173"/>
        <end position="193"/>
    </location>
</feature>
<feature type="splice variant" id="VSP_031669" description="In isoform 2." evidence="4">
    <location>
        <begin position="1"/>
        <end position="93"/>
    </location>
</feature>
<feature type="splice variant" id="VSP_053907" description="In isoform 3." evidence="5">
    <location>
        <begin position="76"/>
        <end position="116"/>
    </location>
</feature>
<feature type="sequence variant" id="VAR_053524" description="In dbSNP:rs12363342.">
    <original>S</original>
    <variation>G</variation>
    <location>
        <position position="20"/>
    </location>
</feature>
<feature type="sequence variant" id="VAR_053525" description="In dbSNP:rs1032939." evidence="3">
    <original>L</original>
    <variation>R</variation>
    <location>
        <position position="47"/>
    </location>
</feature>
<feature type="sequence conflict" description="In Ref. 1; AAV91957." evidence="6" ref="1">
    <original>S</original>
    <variation>P</variation>
    <location>
        <position position="225"/>
    </location>
</feature>
<comment type="function">
    <text evidence="1">May be involved in signal transduction as a component of a multimeric receptor complex.</text>
</comment>
<comment type="subcellular location">
    <subcellularLocation>
        <location evidence="6">Membrane</location>
        <topology evidence="6">Multi-pass membrane protein</topology>
    </subcellularLocation>
</comment>
<comment type="alternative products">
    <event type="alternative splicing"/>
    <isoform>
        <id>Q8N5U1-1</id>
        <name>1</name>
        <sequence type="displayed"/>
    </isoform>
    <isoform>
        <id>Q8N5U1-2</id>
        <name>2</name>
        <sequence type="described" ref="VSP_031669"/>
    </isoform>
    <isoform>
        <id>Q8N5U1-3</id>
        <name>3</name>
        <sequence type="described" ref="VSP_053907"/>
    </isoform>
</comment>
<comment type="similarity">
    <text evidence="6">Belongs to the MS4A family.</text>
</comment>
<name>M4A15_HUMAN</name>
<proteinExistence type="evidence at transcript level"/>
<keyword id="KW-0025">Alternative splicing</keyword>
<keyword id="KW-0472">Membrane</keyword>
<keyword id="KW-0675">Receptor</keyword>
<keyword id="KW-1185">Reference proteome</keyword>
<keyword id="KW-0812">Transmembrane</keyword>
<keyword id="KW-1133">Transmembrane helix</keyword>
<protein>
    <recommendedName>
        <fullName>Membrane-spanning 4-domains subfamily A member 15</fullName>
    </recommendedName>
</protein>
<dbReference type="EMBL" id="AY584608">
    <property type="protein sequence ID" value="AAV91957.1"/>
    <property type="molecule type" value="mRNA"/>
</dbReference>
<dbReference type="EMBL" id="AY584609">
    <property type="protein sequence ID" value="AAV91958.1"/>
    <property type="molecule type" value="mRNA"/>
</dbReference>
<dbReference type="EMBL" id="AP004243">
    <property type="status" value="NOT_ANNOTATED_CDS"/>
    <property type="molecule type" value="Genomic_DNA"/>
</dbReference>
<dbReference type="EMBL" id="CH471076">
    <property type="protein sequence ID" value="EAW73898.1"/>
    <property type="molecule type" value="Genomic_DNA"/>
</dbReference>
<dbReference type="EMBL" id="BC031610">
    <property type="protein sequence ID" value="AAH31610.1"/>
    <property type="molecule type" value="mRNA"/>
</dbReference>
<dbReference type="CCDS" id="CCDS44617.1">
    <molecule id="Q8N5U1-1"/>
</dbReference>
<dbReference type="CCDS" id="CCDS60802.1">
    <molecule id="Q8N5U1-3"/>
</dbReference>
<dbReference type="CCDS" id="CCDS7991.1">
    <molecule id="Q8N5U1-2"/>
</dbReference>
<dbReference type="RefSeq" id="NP_001092305.1">
    <molecule id="Q8N5U1-1"/>
    <property type="nucleotide sequence ID" value="NM_001098835.2"/>
</dbReference>
<dbReference type="RefSeq" id="NP_001265171.1">
    <molecule id="Q8N5U1-3"/>
    <property type="nucleotide sequence ID" value="NM_001278242.2"/>
</dbReference>
<dbReference type="RefSeq" id="NP_689930.1">
    <molecule id="Q8N5U1-2"/>
    <property type="nucleotide sequence ID" value="NM_152717.3"/>
</dbReference>
<dbReference type="RefSeq" id="XP_006718522.1">
    <molecule id="Q8N5U1-2"/>
    <property type="nucleotide sequence ID" value="XM_006718459.5"/>
</dbReference>
<dbReference type="RefSeq" id="XP_011543114.1">
    <molecule id="Q8N5U1-1"/>
    <property type="nucleotide sequence ID" value="XM_011544812.4"/>
</dbReference>
<dbReference type="RefSeq" id="XP_011543116.1">
    <property type="nucleotide sequence ID" value="XM_011544814.1"/>
</dbReference>
<dbReference type="RefSeq" id="XP_047282503.1">
    <molecule id="Q8N5U1-3"/>
    <property type="nucleotide sequence ID" value="XM_047426547.1"/>
</dbReference>
<dbReference type="RefSeq" id="XP_047282504.1">
    <molecule id="Q8N5U1-2"/>
    <property type="nucleotide sequence ID" value="XM_047426548.1"/>
</dbReference>
<dbReference type="RefSeq" id="XP_054223973.1">
    <molecule id="Q8N5U1-2"/>
    <property type="nucleotide sequence ID" value="XM_054367998.1"/>
</dbReference>
<dbReference type="RefSeq" id="XP_054223974.1">
    <molecule id="Q8N5U1-2"/>
    <property type="nucleotide sequence ID" value="XM_054367999.1"/>
</dbReference>
<dbReference type="SMR" id="Q8N5U1"/>
<dbReference type="BioGRID" id="128615">
    <property type="interactions" value="38"/>
</dbReference>
<dbReference type="FunCoup" id="Q8N5U1">
    <property type="interactions" value="476"/>
</dbReference>
<dbReference type="IntAct" id="Q8N5U1">
    <property type="interactions" value="38"/>
</dbReference>
<dbReference type="STRING" id="9606.ENSP00000386022"/>
<dbReference type="iPTMnet" id="Q8N5U1"/>
<dbReference type="PhosphoSitePlus" id="Q8N5U1"/>
<dbReference type="BioMuta" id="MS4A15"/>
<dbReference type="DMDM" id="182705272"/>
<dbReference type="jPOST" id="Q8N5U1"/>
<dbReference type="PaxDb" id="9606-ENSP00000386022"/>
<dbReference type="PeptideAtlas" id="Q8N5U1"/>
<dbReference type="Antibodypedia" id="27949">
    <property type="antibodies" value="58 antibodies from 11 providers"/>
</dbReference>
<dbReference type="DNASU" id="219995"/>
<dbReference type="Ensembl" id="ENST00000337911.8">
    <molecule id="Q8N5U1-2"/>
    <property type="protein sequence ID" value="ENSP00000338692.4"/>
    <property type="gene ID" value="ENSG00000166961.15"/>
</dbReference>
<dbReference type="Ensembl" id="ENST00000405633.4">
    <molecule id="Q8N5U1-1"/>
    <property type="protein sequence ID" value="ENSP00000386022.3"/>
    <property type="gene ID" value="ENSG00000166961.15"/>
</dbReference>
<dbReference type="Ensembl" id="ENST00000528170.5">
    <molecule id="Q8N5U1-3"/>
    <property type="protein sequence ID" value="ENSP00000434165.1"/>
    <property type="gene ID" value="ENSG00000166961.15"/>
</dbReference>
<dbReference type="GeneID" id="219995"/>
<dbReference type="KEGG" id="hsa:219995"/>
<dbReference type="MANE-Select" id="ENST00000405633.4">
    <property type="protein sequence ID" value="ENSP00000386022.3"/>
    <property type="RefSeq nucleotide sequence ID" value="NM_001098835.2"/>
    <property type="RefSeq protein sequence ID" value="NP_001092305.1"/>
</dbReference>
<dbReference type="UCSC" id="uc001npx.3">
    <molecule id="Q8N5U1-1"/>
    <property type="organism name" value="human"/>
</dbReference>
<dbReference type="AGR" id="HGNC:28573"/>
<dbReference type="CTD" id="219995"/>
<dbReference type="GeneCards" id="MS4A15"/>
<dbReference type="HGNC" id="HGNC:28573">
    <property type="gene designation" value="MS4A15"/>
</dbReference>
<dbReference type="HPA" id="ENSG00000166961">
    <property type="expression patterns" value="Tissue enriched (lung)"/>
</dbReference>
<dbReference type="neXtProt" id="NX_Q8N5U1"/>
<dbReference type="OpenTargets" id="ENSG00000166961"/>
<dbReference type="PharmGKB" id="PA134959869"/>
<dbReference type="VEuPathDB" id="HostDB:ENSG00000166961"/>
<dbReference type="eggNOG" id="ENOG502S2RH">
    <property type="taxonomic scope" value="Eukaryota"/>
</dbReference>
<dbReference type="GeneTree" id="ENSGT00940000162324"/>
<dbReference type="HOGENOM" id="CLU_091032_1_1_1"/>
<dbReference type="InParanoid" id="Q8N5U1"/>
<dbReference type="OMA" id="MQGMGNF"/>
<dbReference type="OrthoDB" id="8951938at2759"/>
<dbReference type="PAN-GO" id="Q8N5U1">
    <property type="GO annotations" value="2 GO annotations based on evolutionary models"/>
</dbReference>
<dbReference type="PhylomeDB" id="Q8N5U1"/>
<dbReference type="TreeFam" id="TF335157"/>
<dbReference type="PathwayCommons" id="Q8N5U1"/>
<dbReference type="BioGRID-ORCS" id="219995">
    <property type="hits" value="9 hits in 1140 CRISPR screens"/>
</dbReference>
<dbReference type="GenomeRNAi" id="219995"/>
<dbReference type="Pharos" id="Q8N5U1">
    <property type="development level" value="Tdark"/>
</dbReference>
<dbReference type="PRO" id="PR:Q8N5U1"/>
<dbReference type="Proteomes" id="UP000005640">
    <property type="component" value="Chromosome 11"/>
</dbReference>
<dbReference type="RNAct" id="Q8N5U1">
    <property type="molecule type" value="protein"/>
</dbReference>
<dbReference type="Bgee" id="ENSG00000166961">
    <property type="expression patterns" value="Expressed in right lung and 37 other cell types or tissues"/>
</dbReference>
<dbReference type="ExpressionAtlas" id="Q8N5U1">
    <property type="expression patterns" value="baseline and differential"/>
</dbReference>
<dbReference type="GO" id="GO:0005886">
    <property type="term" value="C:plasma membrane"/>
    <property type="evidence" value="ECO:0000318"/>
    <property type="project" value="GO_Central"/>
</dbReference>
<dbReference type="GO" id="GO:0007166">
    <property type="term" value="P:cell surface receptor signaling pathway"/>
    <property type="evidence" value="ECO:0000318"/>
    <property type="project" value="GO_Central"/>
</dbReference>
<dbReference type="InterPro" id="IPR007237">
    <property type="entry name" value="CD20-like"/>
</dbReference>
<dbReference type="InterPro" id="IPR030417">
    <property type="entry name" value="MS4A"/>
</dbReference>
<dbReference type="PANTHER" id="PTHR23320:SF51">
    <property type="entry name" value="MEMBRANE-SPANNING 4-DOMAINS SUBFAMILY A MEMBER 15"/>
    <property type="match status" value="1"/>
</dbReference>
<dbReference type="PANTHER" id="PTHR23320">
    <property type="entry name" value="MEMBRANE-SPANNING 4-DOMAINS SUBFAMILY A MS4A -RELATED"/>
    <property type="match status" value="1"/>
</dbReference>
<dbReference type="Pfam" id="PF04103">
    <property type="entry name" value="CD20"/>
    <property type="match status" value="1"/>
</dbReference>